<accession>Q65W80</accession>
<gene>
    <name evidence="1" type="primary">tusA</name>
    <name type="ordered locus">MS0173</name>
</gene>
<dbReference type="EMBL" id="AE016827">
    <property type="protein sequence ID" value="AAU36780.1"/>
    <property type="status" value="ALT_INIT"/>
    <property type="molecule type" value="Genomic_DNA"/>
</dbReference>
<dbReference type="RefSeq" id="WP_011199356.1">
    <property type="nucleotide sequence ID" value="NC_006300.1"/>
</dbReference>
<dbReference type="SMR" id="Q65W80"/>
<dbReference type="STRING" id="221988.MS0173"/>
<dbReference type="KEGG" id="msu:MS0173"/>
<dbReference type="eggNOG" id="COG0425">
    <property type="taxonomic scope" value="Bacteria"/>
</dbReference>
<dbReference type="HOGENOM" id="CLU_165255_5_0_6"/>
<dbReference type="OrthoDB" id="9797352at2"/>
<dbReference type="Proteomes" id="UP000000607">
    <property type="component" value="Chromosome"/>
</dbReference>
<dbReference type="GO" id="GO:0005737">
    <property type="term" value="C:cytoplasm"/>
    <property type="evidence" value="ECO:0007669"/>
    <property type="project" value="UniProtKB-SubCell"/>
</dbReference>
<dbReference type="GO" id="GO:0097163">
    <property type="term" value="F:sulfur carrier activity"/>
    <property type="evidence" value="ECO:0007669"/>
    <property type="project" value="UniProtKB-UniRule"/>
</dbReference>
<dbReference type="GO" id="GO:0002143">
    <property type="term" value="P:tRNA wobble position uridine thiolation"/>
    <property type="evidence" value="ECO:0007669"/>
    <property type="project" value="InterPro"/>
</dbReference>
<dbReference type="CDD" id="cd03423">
    <property type="entry name" value="SirA"/>
    <property type="match status" value="1"/>
</dbReference>
<dbReference type="Gene3D" id="3.30.110.40">
    <property type="entry name" value="TusA-like domain"/>
    <property type="match status" value="1"/>
</dbReference>
<dbReference type="HAMAP" id="MF_00413">
    <property type="entry name" value="Thiourid_synth_A"/>
    <property type="match status" value="1"/>
</dbReference>
<dbReference type="InterPro" id="IPR022931">
    <property type="entry name" value="Sulphur_carrier_TusA"/>
</dbReference>
<dbReference type="InterPro" id="IPR001455">
    <property type="entry name" value="TusA-like"/>
</dbReference>
<dbReference type="InterPro" id="IPR036868">
    <property type="entry name" value="TusA-like_sf"/>
</dbReference>
<dbReference type="NCBIfam" id="NF001423">
    <property type="entry name" value="PRK00299.1"/>
    <property type="match status" value="1"/>
</dbReference>
<dbReference type="PANTHER" id="PTHR33279:SF2">
    <property type="entry name" value="SULFUR CARRIER PROTEIN TUSA"/>
    <property type="match status" value="1"/>
</dbReference>
<dbReference type="PANTHER" id="PTHR33279">
    <property type="entry name" value="SULFUR CARRIER PROTEIN YEDF-RELATED"/>
    <property type="match status" value="1"/>
</dbReference>
<dbReference type="Pfam" id="PF01206">
    <property type="entry name" value="TusA"/>
    <property type="match status" value="1"/>
</dbReference>
<dbReference type="SUPFAM" id="SSF64307">
    <property type="entry name" value="SirA-like"/>
    <property type="match status" value="1"/>
</dbReference>
<dbReference type="PROSITE" id="PS01148">
    <property type="entry name" value="UPF0033"/>
    <property type="match status" value="1"/>
</dbReference>
<sequence length="79" mass="9101">MNEIISNHTLDALGLRCPEPVMMVRKQIRHMQDGEVLLIIADDPATTRDIPSFCQFMDHTLLNSETESLPFKYWVKKGL</sequence>
<feature type="chain" id="PRO_0000159041" description="Sulfur carrier protein TusA">
    <location>
        <begin position="1"/>
        <end position="79"/>
    </location>
</feature>
<feature type="active site" description="Cysteine persulfide intermediate" evidence="1">
    <location>
        <position position="17"/>
    </location>
</feature>
<evidence type="ECO:0000255" key="1">
    <source>
        <dbReference type="HAMAP-Rule" id="MF_00413"/>
    </source>
</evidence>
<evidence type="ECO:0000305" key="2"/>
<keyword id="KW-0963">Cytoplasm</keyword>
<comment type="function">
    <text evidence="1">Sulfur carrier protein which probably makes part of a sulfur-relay system.</text>
</comment>
<comment type="subcellular location">
    <subcellularLocation>
        <location evidence="1">Cytoplasm</location>
    </subcellularLocation>
</comment>
<comment type="similarity">
    <text evidence="1">Belongs to the sulfur carrier protein TusA family.</text>
</comment>
<comment type="sequence caution" evidence="2">
    <conflict type="erroneous initiation">
        <sequence resource="EMBL-CDS" id="AAU36780"/>
    </conflict>
</comment>
<protein>
    <recommendedName>
        <fullName evidence="1">Sulfur carrier protein TusA</fullName>
    </recommendedName>
</protein>
<reference key="1">
    <citation type="journal article" date="2004" name="Nat. Biotechnol.">
        <title>The genome sequence of the capnophilic rumen bacterium Mannheimia succiniciproducens.</title>
        <authorList>
            <person name="Hong S.H."/>
            <person name="Kim J.S."/>
            <person name="Lee S.Y."/>
            <person name="In Y.H."/>
            <person name="Choi S.S."/>
            <person name="Rih J.-K."/>
            <person name="Kim C.H."/>
            <person name="Jeong H."/>
            <person name="Hur C.G."/>
            <person name="Kim J.J."/>
        </authorList>
    </citation>
    <scope>NUCLEOTIDE SEQUENCE [LARGE SCALE GENOMIC DNA]</scope>
    <source>
        <strain>KCTC 0769BP / MBEL55E</strain>
    </source>
</reference>
<name>TUSA_MANSM</name>
<proteinExistence type="inferred from homology"/>
<organism>
    <name type="scientific">Mannheimia succiniciproducens (strain KCTC 0769BP / MBEL55E)</name>
    <dbReference type="NCBI Taxonomy" id="221988"/>
    <lineage>
        <taxon>Bacteria</taxon>
        <taxon>Pseudomonadati</taxon>
        <taxon>Pseudomonadota</taxon>
        <taxon>Gammaproteobacteria</taxon>
        <taxon>Pasteurellales</taxon>
        <taxon>Pasteurellaceae</taxon>
        <taxon>Basfia</taxon>
    </lineage>
</organism>